<proteinExistence type="inferred from homology"/>
<sequence>MGSTETELKRILSDLNVTPLLLGTYDKRFPGFVSKAKPCPIVNTAFGETGGEHWIAMAWYPPNNSFYMFDPFGFSDQKLKQIYDFEYQGLLRRSALTSSKDRCVQLIRSTDTVQGPNSAGCGLFGGLFLKSFACNPARPRNGNPIIDIVRGVPNERFTDPSSLPILYRNQENMYAFLENNSPYFVSHEREIKRKTAFDYIQ</sequence>
<reference key="1">
    <citation type="journal article" date="1997" name="Virus Res.">
        <title>Sequence analysis of equine adenovirus 2 hexon and 23K proteinase genes indicates a phylogenetic origin distinct from equine adenovirus 1.</title>
        <authorList>
            <person name="Reubel G.H."/>
            <person name="Studdert M.J."/>
        </authorList>
    </citation>
    <scope>NUCLEOTIDE SEQUENCE [GENOMIC DNA]</scope>
    <source>
        <strain>385/75</strain>
    </source>
</reference>
<organism>
    <name type="scientific">Equine adenovirus B serotype 2</name>
    <name type="common">EAdV-2</name>
    <name type="synonym">Equine adenovirus 2</name>
    <dbReference type="NCBI Taxonomy" id="67603"/>
    <lineage>
        <taxon>Viruses</taxon>
        <taxon>Varidnaviria</taxon>
        <taxon>Bamfordvirae</taxon>
        <taxon>Preplasmiviricota</taxon>
        <taxon>Tectiliviricetes</taxon>
        <taxon>Rowavirales</taxon>
        <taxon>Adenoviridae</taxon>
        <taxon>Mastadenovirus</taxon>
        <taxon>Equine mastadenovirus B</taxon>
    </lineage>
</organism>
<gene>
    <name evidence="1" type="primary">L3</name>
</gene>
<feature type="chain" id="PRO_0000218041" description="Protease">
    <location>
        <begin position="1"/>
        <end position="201"/>
    </location>
</feature>
<feature type="active site" evidence="1">
    <location>
        <position position="53"/>
    </location>
</feature>
<feature type="active site" evidence="1">
    <location>
        <position position="70"/>
    </location>
</feature>
<feature type="active site" evidence="1">
    <location>
        <position position="121"/>
    </location>
</feature>
<feature type="site" description="Cleavage; by autolysis" evidence="1">
    <location>
        <begin position="50"/>
        <end position="51"/>
    </location>
</feature>
<feature type="disulfide bond" description="Interchain (with C-10 in cleaved protease cofactor pVI-C)" evidence="1">
    <location>
        <position position="103"/>
    </location>
</feature>
<keyword id="KW-0068">Autocatalytic cleavage</keyword>
<keyword id="KW-1015">Disulfide bond</keyword>
<keyword id="KW-0238">DNA-binding</keyword>
<keyword id="KW-1048">Host nucleus</keyword>
<keyword id="KW-0378">Hydrolase</keyword>
<keyword id="KW-0426">Late protein</keyword>
<keyword id="KW-0645">Protease</keyword>
<keyword id="KW-0788">Thiol protease</keyword>
<keyword id="KW-0946">Virion</keyword>
<evidence type="ECO:0000255" key="1">
    <source>
        <dbReference type="HAMAP-Rule" id="MF_04059"/>
    </source>
</evidence>
<dbReference type="EC" id="3.4.22.39" evidence="1"/>
<dbReference type="EMBL" id="L80007">
    <property type="protein sequence ID" value="AAB88061.1"/>
    <property type="molecule type" value="Genomic_DNA"/>
</dbReference>
<dbReference type="SMR" id="O40958"/>
<dbReference type="MEROPS" id="C05.001"/>
<dbReference type="GO" id="GO:0042025">
    <property type="term" value="C:host cell nucleus"/>
    <property type="evidence" value="ECO:0007669"/>
    <property type="project" value="UniProtKB-SubCell"/>
</dbReference>
<dbReference type="GO" id="GO:0044423">
    <property type="term" value="C:virion component"/>
    <property type="evidence" value="ECO:0007669"/>
    <property type="project" value="UniProtKB-UniRule"/>
</dbReference>
<dbReference type="GO" id="GO:0004197">
    <property type="term" value="F:cysteine-type endopeptidase activity"/>
    <property type="evidence" value="ECO:0007669"/>
    <property type="project" value="UniProtKB-UniRule"/>
</dbReference>
<dbReference type="GO" id="GO:0003677">
    <property type="term" value="F:DNA binding"/>
    <property type="evidence" value="ECO:0007669"/>
    <property type="project" value="UniProtKB-UniRule"/>
</dbReference>
<dbReference type="GO" id="GO:0006508">
    <property type="term" value="P:proteolysis"/>
    <property type="evidence" value="ECO:0007669"/>
    <property type="project" value="UniProtKB-KW"/>
</dbReference>
<dbReference type="Gene3D" id="3.40.395.10">
    <property type="entry name" value="Adenoviral Proteinase, Chain A"/>
    <property type="match status" value="1"/>
</dbReference>
<dbReference type="HAMAP" id="MF_04059">
    <property type="entry name" value="ADV_PRO"/>
    <property type="match status" value="1"/>
</dbReference>
<dbReference type="InterPro" id="IPR038765">
    <property type="entry name" value="Papain-like_cys_pep_sf"/>
</dbReference>
<dbReference type="InterPro" id="IPR000855">
    <property type="entry name" value="Peptidase_C5"/>
</dbReference>
<dbReference type="Pfam" id="PF00770">
    <property type="entry name" value="Peptidase_C5"/>
    <property type="match status" value="1"/>
</dbReference>
<dbReference type="PIRSF" id="PIRSF001218">
    <property type="entry name" value="Protease_ADV"/>
    <property type="match status" value="1"/>
</dbReference>
<dbReference type="PRINTS" id="PR00703">
    <property type="entry name" value="ADVENDOPTASE"/>
</dbReference>
<dbReference type="SUPFAM" id="SSF54001">
    <property type="entry name" value="Cysteine proteinases"/>
    <property type="match status" value="1"/>
</dbReference>
<name>PRO_ADEE2</name>
<organismHost>
    <name type="scientific">Equus caballus</name>
    <name type="common">Horse</name>
    <dbReference type="NCBI Taxonomy" id="9796"/>
</organismHost>
<protein>
    <recommendedName>
        <fullName evidence="1">Protease</fullName>
        <ecNumber evidence="1">3.4.22.39</ecNumber>
    </recommendedName>
    <alternativeName>
        <fullName evidence="1">Adenain</fullName>
    </alternativeName>
    <alternativeName>
        <fullName evidence="1">Adenovirus protease</fullName>
        <shortName evidence="1">AVP</shortName>
    </alternativeName>
    <alternativeName>
        <fullName evidence="1">Adenovirus proteinase</fullName>
    </alternativeName>
    <alternativeName>
        <fullName evidence="1">Endoprotease</fullName>
    </alternativeName>
</protein>
<accession>O40958</accession>
<comment type="function">
    <text evidence="1">Cleaves viral precursor proteins (pTP, pIIIa, pVI, pVII, pVIII, and pX) inside newly assembled particles giving rise to mature virions. Protease complexed to its cofactor slides along the viral DNA to specifically locate and cleave the viral precursors. Mature virions have a weakened organization compared to the unmature virions, thereby facilitating subsequent uncoating. Without maturation, the particle lacks infectivity and is unable to uncoat. Late in adenovirus infection, in the cytoplasm, may participate in the cytoskeleton destruction. Cleaves host cell cytoskeletal keratins K7 and K18.</text>
</comment>
<comment type="catalytic activity">
    <reaction evidence="1">
        <text>Cleaves proteins of the adenovirus and its host cell at two consensus sites: -Yaa-Xaa-Gly-Gly-|-Xaa- and -Yaa-Xaa-Gly-Xaa-|-Gly- (in which Yaa is Met, Ile or Leu, and Xaa is any amino acid).</text>
        <dbReference type="EC" id="3.4.22.39"/>
    </reaction>
</comment>
<comment type="activity regulation">
    <text evidence="1">Requires DNA and protease cofactor for maximal activation. Inside nascent virions, becomes partially activated by binding to the viral DNA, allowing it to cleave the cofactor that binds to the protease and fully activates it. Actin, like the viral protease cofactor, seems to act as a cofactor in the cleavage of cytokeratin 18 and of actin itself.</text>
</comment>
<comment type="subunit">
    <text evidence="1">Interacts with protease cofactor pVI-C; this interaction is necessary for protease activation.</text>
</comment>
<comment type="subcellular location">
    <subcellularLocation>
        <location evidence="1">Virion</location>
    </subcellularLocation>
    <subcellularLocation>
        <location evidence="1">Host nucleus</location>
    </subcellularLocation>
    <text evidence="1">Present in about 10 copies per virion.</text>
</comment>
<comment type="induction">
    <text evidence="1">Expressed in the late phase of the viral replicative cycle.</text>
</comment>
<comment type="miscellaneous">
    <text evidence="1">All late proteins expressed from the major late promoter are produced by alternative splicing and alternative polyadenylation of the same gene giving rise to non-overlapping ORFs. A leader sequence is present in the N-terminus of all these mRNAs and is recognized by the viral shutoff protein to provide expression although conventional translation via ribosome scanning from the cap has been shut off in the host cell.</text>
</comment>
<comment type="similarity">
    <text evidence="1">Belongs to the peptidase C5 family.</text>
</comment>